<sequence length="1390" mass="157648">MEVLMAERADLVFHNKAIDGTAMKRLISRLIDHFGMAYTSHILDQVKTLGFQQATATSISLGIDDLLTIPSKGWLVQDAEQQSLTLEKNHHYGNVHAVEKLRQSIEIWYATSEYLRQEMNPNFRMTDPSNPVHIMSFSGARGNASQVHQLVGMRGLMSDPQGQMIDLPIQSNLREGLSLTEYIISCYGARKGVVDTAVRTSDAGYLTRRLVEVVQHIVVRRTDCGTIRRISVSPQNGMTEKIFIQTLIGRVLADDIYIGPRCIATRNQDIGIGLINRFITFRAQPIYIRTPFTCRSTSWICRLCYGRSPTHGDLVELGEAVGIIAGQSIGEPGTQLTLRTFHTGGVFTGGTAEHVRAPSNGKIKFNEDLVHPTRTRHGHPAFLCYIDLYVTIESQSIIHNVNIPPKSLILVQNDQYVESEQVIAEIRTGASTFHFKERVRKHIYSDSQGEMHWSTDVYHAPEYTYGNVHLLPKTSHLWILSGGPCRSSIVPFSIQKDQDQINVNSLFVEQRYISDLSVTNDRVRHKIFSSDPSGQKGGRIFDYDSGPDRIVSNSQFLYPAIPHENSDLLAKRRRNRFLIPFQYDQEQEKELMCPYGISTEIPINGILRRNSILAYFDDPRYRRSSSGITKYATIEVDSIVKKEDLIEYRGSKEFRPKYQTKVDRFFFIPEEVHILPGSSSIMVRNNSIIGVDTRITLNIRSRVGGLVRVERKKKRIELKIFSGDIHFPGETDKISRHSGILIPPGVVKKNSKKSKKKWKNWIYIQRITPTKKKYFVSVRPVVTYEIADGINLPTLFPQDLLQERDNMQLQVVNYIISGNGKPSRGIPQTSIQLVRTCLVLNWDQDLKGSLEEIHASFVEVRTNDLIRDFIRIDLVKSPISYTGKRNDTWGSGLNPDSISDCTNINPFYSKARLPSFTQPKGTVRTLRNKEYQSLIILSSSDCYQIGPFKDSKYNKTTNCHNITKELIKEDSPVPISNSLGPLGAVPKFLNFDSFSHLITHNQILLKKYLLLDNLKHTSQVMKYFLLDENGKIHNTDPCRNIFFNPSHLNWYSLHHDFFYETPITISLGQFICENVYIFEYGPHIKSGQVLIVQFDSLVIRSAKPHLATPGATVHGHYGEILYEGDTLVTFIYEKSRSGDITQGLPKVEQVLEVRSIDSISLNLEKRVEGWNERVTRILGIPWGFLIGAELTIAQSCISLVNKIQKVYRSQGVQIHNRHIEIVVRQITSKVLVSEDGMSNVFSPGELIGLLRAERTGRALEEAIRYRAILVGITRASLNTQSFISEASFQETARVLAKAALRGRIDWLKGLKENVVLGGMIPVGTGFKGLVHHSRQHNNIPLEIKKRNLFEFEGEMGDILFHHRQSFGSCIQKTFHETSEQSFGFGRFNDS</sequence>
<geneLocation type="chloroplast"/>
<dbReference type="EC" id="2.7.7.6" evidence="1"/>
<dbReference type="EMBL" id="EF614270">
    <property type="protein sequence ID" value="ABQ81440.1"/>
    <property type="molecule type" value="Genomic_DNA"/>
</dbReference>
<dbReference type="RefSeq" id="YP_001542437.1">
    <property type="nucleotide sequence ID" value="NC_009962.1"/>
</dbReference>
<dbReference type="SMR" id="A8SE78"/>
<dbReference type="GeneID" id="5729432"/>
<dbReference type="GO" id="GO:0009507">
    <property type="term" value="C:chloroplast"/>
    <property type="evidence" value="ECO:0007669"/>
    <property type="project" value="UniProtKB-SubCell"/>
</dbReference>
<dbReference type="GO" id="GO:0000428">
    <property type="term" value="C:DNA-directed RNA polymerase complex"/>
    <property type="evidence" value="ECO:0007669"/>
    <property type="project" value="UniProtKB-KW"/>
</dbReference>
<dbReference type="GO" id="GO:0005739">
    <property type="term" value="C:mitochondrion"/>
    <property type="evidence" value="ECO:0007669"/>
    <property type="project" value="GOC"/>
</dbReference>
<dbReference type="GO" id="GO:0003677">
    <property type="term" value="F:DNA binding"/>
    <property type="evidence" value="ECO:0007669"/>
    <property type="project" value="UniProtKB-UniRule"/>
</dbReference>
<dbReference type="GO" id="GO:0003899">
    <property type="term" value="F:DNA-directed RNA polymerase activity"/>
    <property type="evidence" value="ECO:0007669"/>
    <property type="project" value="UniProtKB-UniRule"/>
</dbReference>
<dbReference type="GO" id="GO:0008270">
    <property type="term" value="F:zinc ion binding"/>
    <property type="evidence" value="ECO:0007669"/>
    <property type="project" value="UniProtKB-UniRule"/>
</dbReference>
<dbReference type="GO" id="GO:0006351">
    <property type="term" value="P:DNA-templated transcription"/>
    <property type="evidence" value="ECO:0007669"/>
    <property type="project" value="UniProtKB-UniRule"/>
</dbReference>
<dbReference type="CDD" id="cd02655">
    <property type="entry name" value="RNAP_beta'_C"/>
    <property type="match status" value="1"/>
</dbReference>
<dbReference type="FunFam" id="1.10.132.30:FF:000002">
    <property type="entry name" value="DNA-directed RNA polymerase subunit beta"/>
    <property type="match status" value="1"/>
</dbReference>
<dbReference type="Gene3D" id="1.10.132.30">
    <property type="match status" value="1"/>
</dbReference>
<dbReference type="Gene3D" id="1.10.150.390">
    <property type="match status" value="1"/>
</dbReference>
<dbReference type="Gene3D" id="1.10.1790.20">
    <property type="match status" value="1"/>
</dbReference>
<dbReference type="Gene3D" id="1.10.274.100">
    <property type="entry name" value="RNA polymerase Rpb1, domain 3"/>
    <property type="match status" value="1"/>
</dbReference>
<dbReference type="HAMAP" id="MF_01324">
    <property type="entry name" value="RNApol_bact_RpoC2"/>
    <property type="match status" value="1"/>
</dbReference>
<dbReference type="InterPro" id="IPR012756">
    <property type="entry name" value="DNA-dir_RpoC2_beta_pp"/>
</dbReference>
<dbReference type="InterPro" id="IPR050254">
    <property type="entry name" value="RNA_pol_beta''_euk"/>
</dbReference>
<dbReference type="InterPro" id="IPR042102">
    <property type="entry name" value="RNA_pol_Rpb1_3_sf"/>
</dbReference>
<dbReference type="InterPro" id="IPR007083">
    <property type="entry name" value="RNA_pol_Rpb1_4"/>
</dbReference>
<dbReference type="InterPro" id="IPR007081">
    <property type="entry name" value="RNA_pol_Rpb1_5"/>
</dbReference>
<dbReference type="InterPro" id="IPR038120">
    <property type="entry name" value="Rpb1_funnel_sf"/>
</dbReference>
<dbReference type="NCBIfam" id="TIGR02388">
    <property type="entry name" value="rpoC2_cyan"/>
    <property type="match status" value="1"/>
</dbReference>
<dbReference type="PANTHER" id="PTHR34995">
    <property type="entry name" value="DNA-DIRECTED RNA POLYMERASE SUBUNIT BETA"/>
    <property type="match status" value="1"/>
</dbReference>
<dbReference type="PANTHER" id="PTHR34995:SF1">
    <property type="entry name" value="DNA-DIRECTED RNA POLYMERASE SUBUNIT BETA"/>
    <property type="match status" value="1"/>
</dbReference>
<dbReference type="Pfam" id="PF05000">
    <property type="entry name" value="RNA_pol_Rpb1_4"/>
    <property type="match status" value="1"/>
</dbReference>
<dbReference type="Pfam" id="PF04998">
    <property type="entry name" value="RNA_pol_Rpb1_5"/>
    <property type="match status" value="1"/>
</dbReference>
<dbReference type="SUPFAM" id="SSF64484">
    <property type="entry name" value="beta and beta-prime subunits of DNA dependent RNA-polymerase"/>
    <property type="match status" value="1"/>
</dbReference>
<reference key="1">
    <citation type="journal article" date="2007" name="Proc. Natl. Acad. Sci. U.S.A.">
        <title>Using plastid genome-scale data to resolve enigmatic relationships among basal angiosperms.</title>
        <authorList>
            <person name="Moore M.J."/>
            <person name="Bell C.D."/>
            <person name="Soltis P.S."/>
            <person name="Soltis D.E."/>
        </authorList>
    </citation>
    <scope>NUCLEOTIDE SEQUENCE [LARGE SCALE GENOMIC DNA]</scope>
</reference>
<name>RPOC2_CERDE</name>
<keyword id="KW-0150">Chloroplast</keyword>
<keyword id="KW-0240">DNA-directed RNA polymerase</keyword>
<keyword id="KW-0479">Metal-binding</keyword>
<keyword id="KW-0548">Nucleotidyltransferase</keyword>
<keyword id="KW-0934">Plastid</keyword>
<keyword id="KW-0804">Transcription</keyword>
<keyword id="KW-0808">Transferase</keyword>
<keyword id="KW-0862">Zinc</keyword>
<comment type="function">
    <text evidence="1">DNA-dependent RNA polymerase catalyzes the transcription of DNA into RNA using the four ribonucleoside triphosphates as substrates.</text>
</comment>
<comment type="catalytic activity">
    <reaction evidence="1">
        <text>RNA(n) + a ribonucleoside 5'-triphosphate = RNA(n+1) + diphosphate</text>
        <dbReference type="Rhea" id="RHEA:21248"/>
        <dbReference type="Rhea" id="RHEA-COMP:14527"/>
        <dbReference type="Rhea" id="RHEA-COMP:17342"/>
        <dbReference type="ChEBI" id="CHEBI:33019"/>
        <dbReference type="ChEBI" id="CHEBI:61557"/>
        <dbReference type="ChEBI" id="CHEBI:140395"/>
        <dbReference type="EC" id="2.7.7.6"/>
    </reaction>
</comment>
<comment type="cofactor">
    <cofactor evidence="1">
        <name>Zn(2+)</name>
        <dbReference type="ChEBI" id="CHEBI:29105"/>
    </cofactor>
    <text evidence="1">Binds 1 Zn(2+) ion per subunit.</text>
</comment>
<comment type="subunit">
    <text evidence="1">In plastids the minimal PEP RNA polymerase catalytic core is composed of four subunits: alpha, beta, beta', and beta''. When a (nuclear-encoded) sigma factor is associated with the core the holoenzyme is formed, which can initiate transcription.</text>
</comment>
<comment type="subcellular location">
    <subcellularLocation>
        <location evidence="1">Plastid</location>
        <location evidence="1">Chloroplast</location>
    </subcellularLocation>
</comment>
<comment type="similarity">
    <text evidence="1">Belongs to the RNA polymerase beta' chain family. RpoC2 subfamily.</text>
</comment>
<organism>
    <name type="scientific">Ceratophyllum demersum</name>
    <name type="common">Rigid hornwort</name>
    <name type="synonym">Coontail</name>
    <dbReference type="NCBI Taxonomy" id="4428"/>
    <lineage>
        <taxon>Eukaryota</taxon>
        <taxon>Viridiplantae</taxon>
        <taxon>Streptophyta</taxon>
        <taxon>Embryophyta</taxon>
        <taxon>Tracheophyta</taxon>
        <taxon>Spermatophyta</taxon>
        <taxon>Magnoliopsida</taxon>
        <taxon>Ceratophyllales</taxon>
        <taxon>Ceratophyllaceae</taxon>
        <taxon>Ceratophyllum</taxon>
    </lineage>
</organism>
<protein>
    <recommendedName>
        <fullName evidence="1">DNA-directed RNA polymerase subunit beta''</fullName>
        <ecNumber evidence="1">2.7.7.6</ecNumber>
    </recommendedName>
    <alternativeName>
        <fullName evidence="1">PEP</fullName>
    </alternativeName>
    <alternativeName>
        <fullName evidence="1">Plastid-encoded RNA polymerase subunit beta''</fullName>
        <shortName evidence="1">RNA polymerase subunit beta''</shortName>
    </alternativeName>
</protein>
<proteinExistence type="inferred from homology"/>
<accession>A8SE78</accession>
<feature type="chain" id="PRO_0000353551" description="DNA-directed RNA polymerase subunit beta''">
    <location>
        <begin position="1"/>
        <end position="1390"/>
    </location>
</feature>
<feature type="binding site" evidence="1">
    <location>
        <position position="224"/>
    </location>
    <ligand>
        <name>Zn(2+)</name>
        <dbReference type="ChEBI" id="CHEBI:29105"/>
    </ligand>
</feature>
<feature type="binding site" evidence="1">
    <location>
        <position position="294"/>
    </location>
    <ligand>
        <name>Zn(2+)</name>
        <dbReference type="ChEBI" id="CHEBI:29105"/>
    </ligand>
</feature>
<feature type="binding site" evidence="1">
    <location>
        <position position="301"/>
    </location>
    <ligand>
        <name>Zn(2+)</name>
        <dbReference type="ChEBI" id="CHEBI:29105"/>
    </ligand>
</feature>
<feature type="binding site" evidence="1">
    <location>
        <position position="304"/>
    </location>
    <ligand>
        <name>Zn(2+)</name>
        <dbReference type="ChEBI" id="CHEBI:29105"/>
    </ligand>
</feature>
<gene>
    <name evidence="1" type="primary">rpoC2</name>
</gene>
<evidence type="ECO:0000255" key="1">
    <source>
        <dbReference type="HAMAP-Rule" id="MF_01324"/>
    </source>
</evidence>